<organism>
    <name type="scientific">Citrifermentans bemidjiense (strain ATCC BAA-1014 / DSM 16622 / JCM 12645 / Bem)</name>
    <name type="common">Geobacter bemidjiensis</name>
    <dbReference type="NCBI Taxonomy" id="404380"/>
    <lineage>
        <taxon>Bacteria</taxon>
        <taxon>Pseudomonadati</taxon>
        <taxon>Thermodesulfobacteriota</taxon>
        <taxon>Desulfuromonadia</taxon>
        <taxon>Geobacterales</taxon>
        <taxon>Geobacteraceae</taxon>
        <taxon>Citrifermentans</taxon>
    </lineage>
</organism>
<dbReference type="EC" id="2.4.99.17" evidence="1"/>
<dbReference type="EMBL" id="CP001124">
    <property type="protein sequence ID" value="ACH39444.1"/>
    <property type="molecule type" value="Genomic_DNA"/>
</dbReference>
<dbReference type="RefSeq" id="WP_012530867.1">
    <property type="nucleotide sequence ID" value="NC_011146.1"/>
</dbReference>
<dbReference type="SMR" id="B5EFX9"/>
<dbReference type="STRING" id="404380.Gbem_2436"/>
<dbReference type="KEGG" id="gbm:Gbem_2436"/>
<dbReference type="eggNOG" id="COG0809">
    <property type="taxonomic scope" value="Bacteria"/>
</dbReference>
<dbReference type="HOGENOM" id="CLU_039110_1_0_7"/>
<dbReference type="OrthoDB" id="9805933at2"/>
<dbReference type="UniPathway" id="UPA00392"/>
<dbReference type="Proteomes" id="UP000008825">
    <property type="component" value="Chromosome"/>
</dbReference>
<dbReference type="GO" id="GO:0005737">
    <property type="term" value="C:cytoplasm"/>
    <property type="evidence" value="ECO:0007669"/>
    <property type="project" value="UniProtKB-SubCell"/>
</dbReference>
<dbReference type="GO" id="GO:0051075">
    <property type="term" value="F:S-adenosylmethionine:tRNA ribosyltransferase-isomerase activity"/>
    <property type="evidence" value="ECO:0007669"/>
    <property type="project" value="UniProtKB-EC"/>
</dbReference>
<dbReference type="GO" id="GO:0008616">
    <property type="term" value="P:queuosine biosynthetic process"/>
    <property type="evidence" value="ECO:0007669"/>
    <property type="project" value="UniProtKB-UniRule"/>
</dbReference>
<dbReference type="GO" id="GO:0002099">
    <property type="term" value="P:tRNA wobble guanine modification"/>
    <property type="evidence" value="ECO:0007669"/>
    <property type="project" value="TreeGrafter"/>
</dbReference>
<dbReference type="FunFam" id="3.40.1780.10:FF:000001">
    <property type="entry name" value="S-adenosylmethionine:tRNA ribosyltransferase-isomerase"/>
    <property type="match status" value="1"/>
</dbReference>
<dbReference type="Gene3D" id="2.40.10.240">
    <property type="entry name" value="QueA-like"/>
    <property type="match status" value="1"/>
</dbReference>
<dbReference type="Gene3D" id="3.40.1780.10">
    <property type="entry name" value="QueA-like"/>
    <property type="match status" value="1"/>
</dbReference>
<dbReference type="HAMAP" id="MF_00113">
    <property type="entry name" value="QueA"/>
    <property type="match status" value="1"/>
</dbReference>
<dbReference type="InterPro" id="IPR003699">
    <property type="entry name" value="QueA"/>
</dbReference>
<dbReference type="InterPro" id="IPR042118">
    <property type="entry name" value="QueA_dom1"/>
</dbReference>
<dbReference type="InterPro" id="IPR042119">
    <property type="entry name" value="QueA_dom2"/>
</dbReference>
<dbReference type="InterPro" id="IPR036100">
    <property type="entry name" value="QueA_sf"/>
</dbReference>
<dbReference type="NCBIfam" id="NF001140">
    <property type="entry name" value="PRK00147.1"/>
    <property type="match status" value="1"/>
</dbReference>
<dbReference type="NCBIfam" id="TIGR00113">
    <property type="entry name" value="queA"/>
    <property type="match status" value="1"/>
</dbReference>
<dbReference type="PANTHER" id="PTHR30307">
    <property type="entry name" value="S-ADENOSYLMETHIONINE:TRNA RIBOSYLTRANSFERASE-ISOMERASE"/>
    <property type="match status" value="1"/>
</dbReference>
<dbReference type="PANTHER" id="PTHR30307:SF0">
    <property type="entry name" value="S-ADENOSYLMETHIONINE:TRNA RIBOSYLTRANSFERASE-ISOMERASE"/>
    <property type="match status" value="1"/>
</dbReference>
<dbReference type="Pfam" id="PF02547">
    <property type="entry name" value="Queuosine_synth"/>
    <property type="match status" value="1"/>
</dbReference>
<dbReference type="SUPFAM" id="SSF111337">
    <property type="entry name" value="QueA-like"/>
    <property type="match status" value="1"/>
</dbReference>
<sequence length="341" mass="37515">MFLSDFDYELPPELIAQHPASRRDASRLLTLDRLSGAIGEATVASIAAQFLPGDLLVLNDTRVIPARLHGHKESGGAVEIFLVRRVAGEPECWSCLIKASKSPKNGCRVVFPGGVTATVLERDGGDWRVLFEGSDDFMAWLEQTGSMPLPPYIKRAPEGEDLERYQTVFAREKGAVAAPTAGLHFTPAILDEIRGRGVEIVSVTLHVGLGTFMPIRVEDLSEHTMHRELYRIPQETAAAIRRTKERGGRVVALGTTSLRALEHAAASGEVAAGEREADIFILPGYRFRVVDALITNFHLPKSTLFMLVCAFAGKEAMLEAYREAVSRRFRFFSYGDAMFIG</sequence>
<protein>
    <recommendedName>
        <fullName evidence="1">S-adenosylmethionine:tRNA ribosyltransferase-isomerase</fullName>
        <ecNumber evidence="1">2.4.99.17</ecNumber>
    </recommendedName>
    <alternativeName>
        <fullName evidence="1">Queuosine biosynthesis protein QueA</fullName>
    </alternativeName>
</protein>
<proteinExistence type="inferred from homology"/>
<feature type="chain" id="PRO_1000094779" description="S-adenosylmethionine:tRNA ribosyltransferase-isomerase">
    <location>
        <begin position="1"/>
        <end position="341"/>
    </location>
</feature>
<reference key="1">
    <citation type="submission" date="2008-07" db="EMBL/GenBank/DDBJ databases">
        <title>Complete sequence of Geobacter bemidjiensis BEM.</title>
        <authorList>
            <consortium name="US DOE Joint Genome Institute"/>
            <person name="Lucas S."/>
            <person name="Copeland A."/>
            <person name="Lapidus A."/>
            <person name="Glavina del Rio T."/>
            <person name="Dalin E."/>
            <person name="Tice H."/>
            <person name="Bruce D."/>
            <person name="Goodwin L."/>
            <person name="Pitluck S."/>
            <person name="Kiss H."/>
            <person name="Brettin T."/>
            <person name="Detter J.C."/>
            <person name="Han C."/>
            <person name="Kuske C.R."/>
            <person name="Schmutz J."/>
            <person name="Larimer F."/>
            <person name="Land M."/>
            <person name="Hauser L."/>
            <person name="Kyrpides N."/>
            <person name="Lykidis A."/>
            <person name="Lovley D."/>
            <person name="Richardson P."/>
        </authorList>
    </citation>
    <scope>NUCLEOTIDE SEQUENCE [LARGE SCALE GENOMIC DNA]</scope>
    <source>
        <strain>ATCC BAA-1014 / DSM 16622 / JCM 12645 / Bem</strain>
    </source>
</reference>
<keyword id="KW-0963">Cytoplasm</keyword>
<keyword id="KW-0671">Queuosine biosynthesis</keyword>
<keyword id="KW-1185">Reference proteome</keyword>
<keyword id="KW-0949">S-adenosyl-L-methionine</keyword>
<keyword id="KW-0808">Transferase</keyword>
<evidence type="ECO:0000255" key="1">
    <source>
        <dbReference type="HAMAP-Rule" id="MF_00113"/>
    </source>
</evidence>
<name>QUEA_CITBB</name>
<comment type="function">
    <text evidence="1">Transfers and isomerizes the ribose moiety from AdoMet to the 7-aminomethyl group of 7-deazaguanine (preQ1-tRNA) to give epoxyqueuosine (oQ-tRNA).</text>
</comment>
<comment type="catalytic activity">
    <reaction evidence="1">
        <text>7-aminomethyl-7-carbaguanosine(34) in tRNA + S-adenosyl-L-methionine = epoxyqueuosine(34) in tRNA + adenine + L-methionine + 2 H(+)</text>
        <dbReference type="Rhea" id="RHEA:32155"/>
        <dbReference type="Rhea" id="RHEA-COMP:10342"/>
        <dbReference type="Rhea" id="RHEA-COMP:18582"/>
        <dbReference type="ChEBI" id="CHEBI:15378"/>
        <dbReference type="ChEBI" id="CHEBI:16708"/>
        <dbReference type="ChEBI" id="CHEBI:57844"/>
        <dbReference type="ChEBI" id="CHEBI:59789"/>
        <dbReference type="ChEBI" id="CHEBI:82833"/>
        <dbReference type="ChEBI" id="CHEBI:194443"/>
        <dbReference type="EC" id="2.4.99.17"/>
    </reaction>
</comment>
<comment type="pathway">
    <text evidence="1">tRNA modification; tRNA-queuosine biosynthesis.</text>
</comment>
<comment type="subunit">
    <text evidence="1">Monomer.</text>
</comment>
<comment type="subcellular location">
    <subcellularLocation>
        <location evidence="1">Cytoplasm</location>
    </subcellularLocation>
</comment>
<comment type="similarity">
    <text evidence="1">Belongs to the QueA family.</text>
</comment>
<accession>B5EFX9</accession>
<gene>
    <name evidence="1" type="primary">queA</name>
    <name type="ordered locus">Gbem_2436</name>
</gene>